<accession>P49795</accession>
<accession>A8K216</accession>
<accession>E1P5G9</accession>
<accession>Q53XN0</accession>
<accession>Q8TD60</accession>
<name>RGS19_HUMAN</name>
<gene>
    <name type="primary">RGS19</name>
    <name type="synonym">GAIP</name>
    <name type="synonym">GNAI3IP</name>
</gene>
<sequence>MPTPHEAEKQITGPEEADRPPSMSSHDTASPAAPSRNPCCLCWCCCCSCSWNQERRRAWQASRESKLQPLPSCEVCATPSPEEVQSWAQSFDKLMHSPAGRSVFRAFLRTEYSEENMLFWLACEELKAEANQHVVDEKARLIYEDYVSILSPKEVSLDSRVREGINKKMQEPSAHTFDDAQLQIYTLMHRDSYPRFLSSPTYRALLLQGPSQSSSEA</sequence>
<reference key="1">
    <citation type="journal article" date="1995" name="Proc. Natl. Acad. Sci. U.S.A.">
        <title>GAIP, a protein that specifically interacts with the trimeric G protein G alpha i3, is a member of a protein family with a highly conserved core domain.</title>
        <authorList>
            <person name="de Vries L."/>
            <person name="Mousli M."/>
            <person name="Wurmser A."/>
            <person name="Farquhar M.G."/>
        </authorList>
    </citation>
    <scope>NUCLEOTIDE SEQUENCE [MRNA]</scope>
</reference>
<reference key="2">
    <citation type="submission" date="2004-03" db="EMBL/GenBank/DDBJ databases">
        <title>cDNA clones of human proteins involved in signal transduction sequenced by the Guthrie cDNA resource center (www.cdna.org).</title>
        <authorList>
            <person name="Puhl H.L. III"/>
            <person name="Ikeda S.R."/>
            <person name="Aronstam R.S."/>
        </authorList>
    </citation>
    <scope>NUCLEOTIDE SEQUENCE [LARGE SCALE MRNA]</scope>
    <source>
        <tissue>Brain</tissue>
    </source>
</reference>
<reference key="3">
    <citation type="submission" date="2003-08" db="EMBL/GenBank/DDBJ databases">
        <title>Cloning of human full-length CDSs in BD Creator(TM) system donor vector.</title>
        <authorList>
            <person name="Kalnine N."/>
            <person name="Chen X."/>
            <person name="Rolfs A."/>
            <person name="Halleck A."/>
            <person name="Hines L."/>
            <person name="Eisenstein S."/>
            <person name="Koundinya M."/>
            <person name="Raphael J."/>
            <person name="Moreira D."/>
            <person name="Kelley T."/>
            <person name="LaBaer J."/>
            <person name="Lin Y."/>
            <person name="Phelan M."/>
            <person name="Farmer A."/>
        </authorList>
    </citation>
    <scope>NUCLEOTIDE SEQUENCE [LARGE SCALE MRNA]</scope>
</reference>
<reference key="4">
    <citation type="journal article" date="2004" name="Nat. Genet.">
        <title>Complete sequencing and characterization of 21,243 full-length human cDNAs.</title>
        <authorList>
            <person name="Ota T."/>
            <person name="Suzuki Y."/>
            <person name="Nishikawa T."/>
            <person name="Otsuki T."/>
            <person name="Sugiyama T."/>
            <person name="Irie R."/>
            <person name="Wakamatsu A."/>
            <person name="Hayashi K."/>
            <person name="Sato H."/>
            <person name="Nagai K."/>
            <person name="Kimura K."/>
            <person name="Makita H."/>
            <person name="Sekine M."/>
            <person name="Obayashi M."/>
            <person name="Nishi T."/>
            <person name="Shibahara T."/>
            <person name="Tanaka T."/>
            <person name="Ishii S."/>
            <person name="Yamamoto J."/>
            <person name="Saito K."/>
            <person name="Kawai Y."/>
            <person name="Isono Y."/>
            <person name="Nakamura Y."/>
            <person name="Nagahari K."/>
            <person name="Murakami K."/>
            <person name="Yasuda T."/>
            <person name="Iwayanagi T."/>
            <person name="Wagatsuma M."/>
            <person name="Shiratori A."/>
            <person name="Sudo H."/>
            <person name="Hosoiri T."/>
            <person name="Kaku Y."/>
            <person name="Kodaira H."/>
            <person name="Kondo H."/>
            <person name="Sugawara M."/>
            <person name="Takahashi M."/>
            <person name="Kanda K."/>
            <person name="Yokoi T."/>
            <person name="Furuya T."/>
            <person name="Kikkawa E."/>
            <person name="Omura Y."/>
            <person name="Abe K."/>
            <person name="Kamihara K."/>
            <person name="Katsuta N."/>
            <person name="Sato K."/>
            <person name="Tanikawa M."/>
            <person name="Yamazaki M."/>
            <person name="Ninomiya K."/>
            <person name="Ishibashi T."/>
            <person name="Yamashita H."/>
            <person name="Murakawa K."/>
            <person name="Fujimori K."/>
            <person name="Tanai H."/>
            <person name="Kimata M."/>
            <person name="Watanabe M."/>
            <person name="Hiraoka S."/>
            <person name="Chiba Y."/>
            <person name="Ishida S."/>
            <person name="Ono Y."/>
            <person name="Takiguchi S."/>
            <person name="Watanabe S."/>
            <person name="Yosida M."/>
            <person name="Hotuta T."/>
            <person name="Kusano J."/>
            <person name="Kanehori K."/>
            <person name="Takahashi-Fujii A."/>
            <person name="Hara H."/>
            <person name="Tanase T.-O."/>
            <person name="Nomura Y."/>
            <person name="Togiya S."/>
            <person name="Komai F."/>
            <person name="Hara R."/>
            <person name="Takeuchi K."/>
            <person name="Arita M."/>
            <person name="Imose N."/>
            <person name="Musashino K."/>
            <person name="Yuuki H."/>
            <person name="Oshima A."/>
            <person name="Sasaki N."/>
            <person name="Aotsuka S."/>
            <person name="Yoshikawa Y."/>
            <person name="Matsunawa H."/>
            <person name="Ichihara T."/>
            <person name="Shiohata N."/>
            <person name="Sano S."/>
            <person name="Moriya S."/>
            <person name="Momiyama H."/>
            <person name="Satoh N."/>
            <person name="Takami S."/>
            <person name="Terashima Y."/>
            <person name="Suzuki O."/>
            <person name="Nakagawa S."/>
            <person name="Senoh A."/>
            <person name="Mizoguchi H."/>
            <person name="Goto Y."/>
            <person name="Shimizu F."/>
            <person name="Wakebe H."/>
            <person name="Hishigaki H."/>
            <person name="Watanabe T."/>
            <person name="Sugiyama A."/>
            <person name="Takemoto M."/>
            <person name="Kawakami B."/>
            <person name="Yamazaki M."/>
            <person name="Watanabe K."/>
            <person name="Kumagai A."/>
            <person name="Itakura S."/>
            <person name="Fukuzumi Y."/>
            <person name="Fujimori Y."/>
            <person name="Komiyama M."/>
            <person name="Tashiro H."/>
            <person name="Tanigami A."/>
            <person name="Fujiwara T."/>
            <person name="Ono T."/>
            <person name="Yamada K."/>
            <person name="Fujii Y."/>
            <person name="Ozaki K."/>
            <person name="Hirao M."/>
            <person name="Ohmori Y."/>
            <person name="Kawabata A."/>
            <person name="Hikiji T."/>
            <person name="Kobatake N."/>
            <person name="Inagaki H."/>
            <person name="Ikema Y."/>
            <person name="Okamoto S."/>
            <person name="Okitani R."/>
            <person name="Kawakami T."/>
            <person name="Noguchi S."/>
            <person name="Itoh T."/>
            <person name="Shigeta K."/>
            <person name="Senba T."/>
            <person name="Matsumura K."/>
            <person name="Nakajima Y."/>
            <person name="Mizuno T."/>
            <person name="Morinaga M."/>
            <person name="Sasaki M."/>
            <person name="Togashi T."/>
            <person name="Oyama M."/>
            <person name="Hata H."/>
            <person name="Watanabe M."/>
            <person name="Komatsu T."/>
            <person name="Mizushima-Sugano J."/>
            <person name="Satoh T."/>
            <person name="Shirai Y."/>
            <person name="Takahashi Y."/>
            <person name="Nakagawa K."/>
            <person name="Okumura K."/>
            <person name="Nagase T."/>
            <person name="Nomura N."/>
            <person name="Kikuchi H."/>
            <person name="Masuho Y."/>
            <person name="Yamashita R."/>
            <person name="Nakai K."/>
            <person name="Yada T."/>
            <person name="Nakamura Y."/>
            <person name="Ohara O."/>
            <person name="Isogai T."/>
            <person name="Sugano S."/>
        </authorList>
    </citation>
    <scope>NUCLEOTIDE SEQUENCE [LARGE SCALE MRNA]</scope>
    <source>
        <tissue>Subthalamic nucleus</tissue>
    </source>
</reference>
<reference key="5">
    <citation type="journal article" date="2001" name="Nature">
        <title>The DNA sequence and comparative analysis of human chromosome 20.</title>
        <authorList>
            <person name="Deloukas P."/>
            <person name="Matthews L.H."/>
            <person name="Ashurst J.L."/>
            <person name="Burton J."/>
            <person name="Gilbert J.G.R."/>
            <person name="Jones M."/>
            <person name="Stavrides G."/>
            <person name="Almeida J.P."/>
            <person name="Babbage A.K."/>
            <person name="Bagguley C.L."/>
            <person name="Bailey J."/>
            <person name="Barlow K.F."/>
            <person name="Bates K.N."/>
            <person name="Beard L.M."/>
            <person name="Beare D.M."/>
            <person name="Beasley O.P."/>
            <person name="Bird C.P."/>
            <person name="Blakey S.E."/>
            <person name="Bridgeman A.M."/>
            <person name="Brown A.J."/>
            <person name="Buck D."/>
            <person name="Burrill W.D."/>
            <person name="Butler A.P."/>
            <person name="Carder C."/>
            <person name="Carter N.P."/>
            <person name="Chapman J.C."/>
            <person name="Clamp M."/>
            <person name="Clark G."/>
            <person name="Clark L.N."/>
            <person name="Clark S.Y."/>
            <person name="Clee C.M."/>
            <person name="Clegg S."/>
            <person name="Cobley V.E."/>
            <person name="Collier R.E."/>
            <person name="Connor R.E."/>
            <person name="Corby N.R."/>
            <person name="Coulson A."/>
            <person name="Coville G.J."/>
            <person name="Deadman R."/>
            <person name="Dhami P.D."/>
            <person name="Dunn M."/>
            <person name="Ellington A.G."/>
            <person name="Frankland J.A."/>
            <person name="Fraser A."/>
            <person name="French L."/>
            <person name="Garner P."/>
            <person name="Grafham D.V."/>
            <person name="Griffiths C."/>
            <person name="Griffiths M.N.D."/>
            <person name="Gwilliam R."/>
            <person name="Hall R.E."/>
            <person name="Hammond S."/>
            <person name="Harley J.L."/>
            <person name="Heath P.D."/>
            <person name="Ho S."/>
            <person name="Holden J.L."/>
            <person name="Howden P.J."/>
            <person name="Huckle E."/>
            <person name="Hunt A.R."/>
            <person name="Hunt S.E."/>
            <person name="Jekosch K."/>
            <person name="Johnson C.M."/>
            <person name="Johnson D."/>
            <person name="Kay M.P."/>
            <person name="Kimberley A.M."/>
            <person name="King A."/>
            <person name="Knights A."/>
            <person name="Laird G.K."/>
            <person name="Lawlor S."/>
            <person name="Lehvaeslaiho M.H."/>
            <person name="Leversha M.A."/>
            <person name="Lloyd C."/>
            <person name="Lloyd D.M."/>
            <person name="Lovell J.D."/>
            <person name="Marsh V.L."/>
            <person name="Martin S.L."/>
            <person name="McConnachie L.J."/>
            <person name="McLay K."/>
            <person name="McMurray A.A."/>
            <person name="Milne S.A."/>
            <person name="Mistry D."/>
            <person name="Moore M.J.F."/>
            <person name="Mullikin J.C."/>
            <person name="Nickerson T."/>
            <person name="Oliver K."/>
            <person name="Parker A."/>
            <person name="Patel R."/>
            <person name="Pearce T.A.V."/>
            <person name="Peck A.I."/>
            <person name="Phillimore B.J.C.T."/>
            <person name="Prathalingam S.R."/>
            <person name="Plumb R.W."/>
            <person name="Ramsay H."/>
            <person name="Rice C.M."/>
            <person name="Ross M.T."/>
            <person name="Scott C.E."/>
            <person name="Sehra H.K."/>
            <person name="Shownkeen R."/>
            <person name="Sims S."/>
            <person name="Skuce C.D."/>
            <person name="Smith M.L."/>
            <person name="Soderlund C."/>
            <person name="Steward C.A."/>
            <person name="Sulston J.E."/>
            <person name="Swann R.M."/>
            <person name="Sycamore N."/>
            <person name="Taylor R."/>
            <person name="Tee L."/>
            <person name="Thomas D.W."/>
            <person name="Thorpe A."/>
            <person name="Tracey A."/>
            <person name="Tromans A.C."/>
            <person name="Vaudin M."/>
            <person name="Wall M."/>
            <person name="Wallis J.M."/>
            <person name="Whitehead S.L."/>
            <person name="Whittaker P."/>
            <person name="Willey D.L."/>
            <person name="Williams L."/>
            <person name="Williams S.A."/>
            <person name="Wilming L."/>
            <person name="Wray P.W."/>
            <person name="Hubbard T."/>
            <person name="Durbin R.M."/>
            <person name="Bentley D.R."/>
            <person name="Beck S."/>
            <person name="Rogers J."/>
        </authorList>
    </citation>
    <scope>NUCLEOTIDE SEQUENCE [LARGE SCALE GENOMIC DNA]</scope>
</reference>
<reference key="6">
    <citation type="submission" date="2005-09" db="EMBL/GenBank/DDBJ databases">
        <authorList>
            <person name="Mural R.J."/>
            <person name="Istrail S."/>
            <person name="Sutton G.G."/>
            <person name="Florea L."/>
            <person name="Halpern A.L."/>
            <person name="Mobarry C.M."/>
            <person name="Lippert R."/>
            <person name="Walenz B."/>
            <person name="Shatkay H."/>
            <person name="Dew I."/>
            <person name="Miller J.R."/>
            <person name="Flanigan M.J."/>
            <person name="Edwards N.J."/>
            <person name="Bolanos R."/>
            <person name="Fasulo D."/>
            <person name="Halldorsson B.V."/>
            <person name="Hannenhalli S."/>
            <person name="Turner R."/>
            <person name="Yooseph S."/>
            <person name="Lu F."/>
            <person name="Nusskern D.R."/>
            <person name="Shue B.C."/>
            <person name="Zheng X.H."/>
            <person name="Zhong F."/>
            <person name="Delcher A.L."/>
            <person name="Huson D.H."/>
            <person name="Kravitz S.A."/>
            <person name="Mouchard L."/>
            <person name="Reinert K."/>
            <person name="Remington K.A."/>
            <person name="Clark A.G."/>
            <person name="Waterman M.S."/>
            <person name="Eichler E.E."/>
            <person name="Adams M.D."/>
            <person name="Hunkapiller M.W."/>
            <person name="Myers E.W."/>
            <person name="Venter J.C."/>
        </authorList>
    </citation>
    <scope>NUCLEOTIDE SEQUENCE [LARGE SCALE GENOMIC DNA]</scope>
</reference>
<reference key="7">
    <citation type="journal article" date="2004" name="Genome Res.">
        <title>The status, quality, and expansion of the NIH full-length cDNA project: the Mammalian Gene Collection (MGC).</title>
        <authorList>
            <consortium name="The MGC Project Team"/>
        </authorList>
    </citation>
    <scope>NUCLEOTIDE SEQUENCE [LARGE SCALE MRNA]</scope>
    <source>
        <tissue>Blood</tissue>
        <tissue>Placenta</tissue>
        <tissue>Testis</tissue>
    </source>
</reference>
<reference key="8">
    <citation type="journal article" date="1996" name="Proc. Natl. Acad. Sci. U.S.A.">
        <title>GAIP is membrane-anchored by palmitoylation and interacts with the activated (GTP-bound) form of G alpha i subunits.</title>
        <authorList>
            <person name="de Vries L."/>
            <person name="Elenko E."/>
            <person name="Hubler L."/>
            <person name="Jones T.L.Z."/>
            <person name="Farquhar M.G."/>
        </authorList>
    </citation>
    <scope>PALMITOYLATION</scope>
</reference>
<reference key="9">
    <citation type="journal article" date="2008" name="Mol. Cell">
        <title>Kinase-selective enrichment enables quantitative phosphoproteomics of the kinome across the cell cycle.</title>
        <authorList>
            <person name="Daub H."/>
            <person name="Olsen J.V."/>
            <person name="Bairlein M."/>
            <person name="Gnad F."/>
            <person name="Oppermann F.S."/>
            <person name="Korner R."/>
            <person name="Greff Z."/>
            <person name="Keri G."/>
            <person name="Stemmann O."/>
            <person name="Mann M."/>
        </authorList>
    </citation>
    <scope>PHOSPHORYLATION [LARGE SCALE ANALYSIS] AT SER-97</scope>
    <scope>IDENTIFICATION BY MASS SPECTROMETRY [LARGE SCALE ANALYSIS]</scope>
    <source>
        <tissue>Cervix carcinoma</tissue>
    </source>
</reference>
<reference key="10">
    <citation type="journal article" date="2014" name="J. Proteomics">
        <title>An enzyme assisted RP-RPLC approach for in-depth analysis of human liver phosphoproteome.</title>
        <authorList>
            <person name="Bian Y."/>
            <person name="Song C."/>
            <person name="Cheng K."/>
            <person name="Dong M."/>
            <person name="Wang F."/>
            <person name="Huang J."/>
            <person name="Sun D."/>
            <person name="Wang L."/>
            <person name="Ye M."/>
            <person name="Zou H."/>
        </authorList>
    </citation>
    <scope>IDENTIFICATION BY MASS SPECTROMETRY [LARGE SCALE ANALYSIS]</scope>
    <source>
        <tissue>Liver</tissue>
    </source>
</reference>
<reference key="11">
    <citation type="journal article" date="2015" name="Proteomics">
        <title>N-terminome analysis of the human mitochondrial proteome.</title>
        <authorList>
            <person name="Vaca Jacome A.S."/>
            <person name="Rabilloud T."/>
            <person name="Schaeffer-Reiss C."/>
            <person name="Rompais M."/>
            <person name="Ayoub D."/>
            <person name="Lane L."/>
            <person name="Bairoch A."/>
            <person name="Van Dorsselaer A."/>
            <person name="Carapito C."/>
        </authorList>
    </citation>
    <scope>IDENTIFICATION BY MASS SPECTROMETRY [LARGE SCALE ANALYSIS]</scope>
</reference>
<reference key="12">
    <citation type="journal article" date="1999" name="J. Mol. Biol.">
        <title>Solution structure of human GAIP (Galpha interacting protein): a regulator of G protein signaling.</title>
        <authorList>
            <person name="de Alba E."/>
            <person name="De Vries L."/>
            <person name="Farquhar M.G."/>
            <person name="Tjandra N."/>
        </authorList>
    </citation>
    <scope>STRUCTURE BY NMR OF 79-206</scope>
</reference>
<reference key="13">
    <citation type="journal article" date="1998" name="J. Biol. Chem.">
        <title>RGSZ1, a Gz-selective RGS protein in brain. Structure, membrane association, regulation by Galphaz phosphorylation, and relationship to a Gz GTPase-activating protein subfamily.</title>
        <authorList>
            <person name="Wang J."/>
            <person name="Ducret A."/>
            <person name="Tu Y."/>
            <person name="Kozasa T."/>
            <person name="Aebersold R."/>
            <person name="Ross E.M."/>
        </authorList>
    </citation>
    <scope>INHIBITION</scope>
</reference>
<reference key="14">
    <citation type="journal article" date="2000" name="J. Biol. Chem.">
        <title>Erk1/2-dependent phosphorylation of Galpha-interacting protein stimulates its GTPase accelerating activity and autophagy in human colon cancer cells.</title>
        <authorList>
            <person name="Ogier-Denis E."/>
            <person name="Pattingre S."/>
            <person name="El Benna J."/>
            <person name="Codogno P."/>
        </authorList>
    </citation>
    <scope>PHOSPHORYLATION AT SER-151</scope>
    <scope>MUTAGENESIS OF SER-151</scope>
</reference>
<reference key="15">
    <citation type="journal article" date="2021" name="Cells">
        <title>Pediatric Encephalopathy: Clinical, Biochemical and Cellular Insights into the Role of Gln52 of GNAO1 and GNAI1 for the Dominant Disease.</title>
        <authorList>
            <person name="Solis G.P."/>
            <person name="Kozhanova T.V."/>
            <person name="Koval A."/>
            <person name="Zhilina S.S."/>
            <person name="Mescheryakova T.I."/>
            <person name="Abramov A.A."/>
            <person name="Ishmuratov E.V."/>
            <person name="Bolshakova E.S."/>
            <person name="Osipova K.V."/>
            <person name="Ayvazyan S.O."/>
            <person name="Lebon S."/>
            <person name="Kanivets I.V."/>
            <person name="Pyankov D.V."/>
            <person name="Troccaz S."/>
            <person name="Silachev D.N."/>
            <person name="Zavadenko N.N."/>
            <person name="Prityko A.G."/>
            <person name="Katanaev V.L."/>
        </authorList>
    </citation>
    <scope>INTERACTION WITH GNAO1</scope>
</reference>
<feature type="chain" id="PRO_0000204229" description="Regulator of G-protein signaling 19">
    <location>
        <begin position="1"/>
        <end position="217"/>
    </location>
</feature>
<feature type="domain" description="RGS" evidence="2">
    <location>
        <begin position="90"/>
        <end position="206"/>
    </location>
</feature>
<feature type="region of interest" description="Disordered" evidence="3">
    <location>
        <begin position="1"/>
        <end position="29"/>
    </location>
</feature>
<feature type="region of interest" description="Interaction with GIPC">
    <location>
        <begin position="207"/>
        <end position="217"/>
    </location>
</feature>
<feature type="modified residue" description="Phosphoserine" evidence="1">
    <location>
        <position position="24"/>
    </location>
</feature>
<feature type="modified residue" description="Phosphoserine" evidence="8">
    <location>
        <position position="97"/>
    </location>
</feature>
<feature type="modified residue" description="Phosphoserine; by MAPK1 and MAPK3" evidence="4">
    <location>
        <position position="151"/>
    </location>
</feature>
<feature type="mutagenesis site" description="Diminishes gap activity towards G(i)-alpha3 and autophagy in colon cancer cells." evidence="4">
    <original>S</original>
    <variation>A</variation>
    <location>
        <position position="151"/>
    </location>
</feature>
<feature type="sequence conflict" description="In Ref. 2; AAM12653." evidence="7" ref="2">
    <original>A</original>
    <variation>V</variation>
    <location>
        <position position="204"/>
    </location>
</feature>
<feature type="helix" evidence="9">
    <location>
        <begin position="81"/>
        <end position="87"/>
    </location>
</feature>
<feature type="helix" evidence="9">
    <location>
        <begin position="92"/>
        <end position="95"/>
    </location>
</feature>
<feature type="helix" evidence="9">
    <location>
        <begin position="98"/>
        <end position="111"/>
    </location>
</feature>
<feature type="helix" evidence="9">
    <location>
        <begin position="115"/>
        <end position="125"/>
    </location>
</feature>
<feature type="helix" evidence="9">
    <location>
        <begin position="126"/>
        <end position="128"/>
    </location>
</feature>
<feature type="helix" evidence="9">
    <location>
        <begin position="133"/>
        <end position="145"/>
    </location>
</feature>
<feature type="turn" evidence="9">
    <location>
        <begin position="146"/>
        <end position="148"/>
    </location>
</feature>
<feature type="strand" evidence="9">
    <location>
        <begin position="150"/>
        <end position="152"/>
    </location>
</feature>
<feature type="helix" evidence="9">
    <location>
        <begin position="160"/>
        <end position="168"/>
    </location>
</feature>
<feature type="strand" evidence="9">
    <location>
        <begin position="169"/>
        <end position="171"/>
    </location>
</feature>
<feature type="helix" evidence="9">
    <location>
        <begin position="178"/>
        <end position="191"/>
    </location>
</feature>
<feature type="helix" evidence="9">
    <location>
        <begin position="193"/>
        <end position="196"/>
    </location>
</feature>
<feature type="helix" evidence="9">
    <location>
        <begin position="200"/>
        <end position="203"/>
    </location>
</feature>
<protein>
    <recommendedName>
        <fullName>Regulator of G-protein signaling 19</fullName>
        <shortName>RGS19</shortName>
    </recommendedName>
    <alternativeName>
        <fullName>G-alpha-interacting protein</fullName>
        <shortName>GAIP</shortName>
    </alternativeName>
</protein>
<evidence type="ECO:0000250" key="1">
    <source>
        <dbReference type="UniProtKB" id="O70521"/>
    </source>
</evidence>
<evidence type="ECO:0000255" key="2">
    <source>
        <dbReference type="PROSITE-ProRule" id="PRU00171"/>
    </source>
</evidence>
<evidence type="ECO:0000256" key="3">
    <source>
        <dbReference type="SAM" id="MobiDB-lite"/>
    </source>
</evidence>
<evidence type="ECO:0000269" key="4">
    <source>
    </source>
</evidence>
<evidence type="ECO:0000269" key="5">
    <source>
    </source>
</evidence>
<evidence type="ECO:0000269" key="6">
    <source>
    </source>
</evidence>
<evidence type="ECO:0000305" key="7"/>
<evidence type="ECO:0007744" key="8">
    <source>
    </source>
</evidence>
<evidence type="ECO:0007829" key="9">
    <source>
        <dbReference type="PDB" id="1CMZ"/>
    </source>
</evidence>
<proteinExistence type="evidence at protein level"/>
<organism>
    <name type="scientific">Homo sapiens</name>
    <name type="common">Human</name>
    <dbReference type="NCBI Taxonomy" id="9606"/>
    <lineage>
        <taxon>Eukaryota</taxon>
        <taxon>Metazoa</taxon>
        <taxon>Chordata</taxon>
        <taxon>Craniata</taxon>
        <taxon>Vertebrata</taxon>
        <taxon>Euteleostomi</taxon>
        <taxon>Mammalia</taxon>
        <taxon>Eutheria</taxon>
        <taxon>Euarchontoglires</taxon>
        <taxon>Primates</taxon>
        <taxon>Haplorrhini</taxon>
        <taxon>Catarrhini</taxon>
        <taxon>Hominidae</taxon>
        <taxon>Homo</taxon>
    </lineage>
</organism>
<dbReference type="EMBL" id="X91809">
    <property type="protein sequence ID" value="CAA62919.1"/>
    <property type="molecule type" value="mRNA"/>
</dbReference>
<dbReference type="EMBL" id="AF493939">
    <property type="protein sequence ID" value="AAM12653.1"/>
    <property type="molecule type" value="mRNA"/>
</dbReference>
<dbReference type="EMBL" id="AY585188">
    <property type="protein sequence ID" value="AAS94232.1"/>
    <property type="molecule type" value="mRNA"/>
</dbReference>
<dbReference type="EMBL" id="BT009804">
    <property type="protein sequence ID" value="AAP88806.1"/>
    <property type="molecule type" value="mRNA"/>
</dbReference>
<dbReference type="EMBL" id="AK290081">
    <property type="protein sequence ID" value="BAF82770.1"/>
    <property type="molecule type" value="mRNA"/>
</dbReference>
<dbReference type="EMBL" id="AL590548">
    <property type="status" value="NOT_ANNOTATED_CDS"/>
    <property type="molecule type" value="Genomic_DNA"/>
</dbReference>
<dbReference type="EMBL" id="CH471077">
    <property type="protein sequence ID" value="EAW75166.1"/>
    <property type="molecule type" value="Genomic_DNA"/>
</dbReference>
<dbReference type="EMBL" id="CH471077">
    <property type="protein sequence ID" value="EAW75167.1"/>
    <property type="molecule type" value="Genomic_DNA"/>
</dbReference>
<dbReference type="EMBL" id="BC001318">
    <property type="protein sequence ID" value="AAH01318.1"/>
    <property type="molecule type" value="mRNA"/>
</dbReference>
<dbReference type="EMBL" id="BC054337">
    <property type="protein sequence ID" value="AAH54337.1"/>
    <property type="molecule type" value="mRNA"/>
</dbReference>
<dbReference type="EMBL" id="BC063010">
    <property type="protein sequence ID" value="AAH63010.1"/>
    <property type="molecule type" value="mRNA"/>
</dbReference>
<dbReference type="CCDS" id="CCDS13555.1"/>
<dbReference type="RefSeq" id="NP_001034556.1">
    <property type="nucleotide sequence ID" value="NM_001039467.2"/>
</dbReference>
<dbReference type="RefSeq" id="NP_005864.1">
    <property type="nucleotide sequence ID" value="NM_005873.3"/>
</dbReference>
<dbReference type="RefSeq" id="XP_011526787.1">
    <property type="nucleotide sequence ID" value="XM_011528485.3"/>
</dbReference>
<dbReference type="RefSeq" id="XP_011526788.1">
    <property type="nucleotide sequence ID" value="XM_011528486.2"/>
</dbReference>
<dbReference type="RefSeq" id="XP_047295780.1">
    <property type="nucleotide sequence ID" value="XM_047439824.1"/>
</dbReference>
<dbReference type="RefSeq" id="XP_054178801.1">
    <property type="nucleotide sequence ID" value="XM_054322826.1"/>
</dbReference>
<dbReference type="RefSeq" id="XP_054178802.1">
    <property type="nucleotide sequence ID" value="XM_054322827.1"/>
</dbReference>
<dbReference type="PDB" id="1CMZ">
    <property type="method" value="NMR"/>
    <property type="chains" value="A=79-206"/>
</dbReference>
<dbReference type="PDBsum" id="1CMZ"/>
<dbReference type="SMR" id="P49795"/>
<dbReference type="BioGRID" id="115576">
    <property type="interactions" value="29"/>
</dbReference>
<dbReference type="CORUM" id="P49795"/>
<dbReference type="FunCoup" id="P49795">
    <property type="interactions" value="781"/>
</dbReference>
<dbReference type="IntAct" id="P49795">
    <property type="interactions" value="23"/>
</dbReference>
<dbReference type="MINT" id="P49795"/>
<dbReference type="STRING" id="9606.ENSP00000378483"/>
<dbReference type="BindingDB" id="P49795"/>
<dbReference type="ChEMBL" id="CHEMBL3707468"/>
<dbReference type="GuidetoPHARMACOLOGY" id="2802"/>
<dbReference type="iPTMnet" id="P49795"/>
<dbReference type="PhosphoSitePlus" id="P49795"/>
<dbReference type="SwissPalm" id="P49795"/>
<dbReference type="BioMuta" id="RGS19"/>
<dbReference type="DMDM" id="1730186"/>
<dbReference type="jPOST" id="P49795"/>
<dbReference type="MassIVE" id="P49795"/>
<dbReference type="PaxDb" id="9606-ENSP00000378483"/>
<dbReference type="PeptideAtlas" id="P49795"/>
<dbReference type="ProteomicsDB" id="56122"/>
<dbReference type="Pumba" id="P49795"/>
<dbReference type="Antibodypedia" id="29985">
    <property type="antibodies" value="463 antibodies from 29 providers"/>
</dbReference>
<dbReference type="DNASU" id="10287"/>
<dbReference type="Ensembl" id="ENST00000332298.9">
    <property type="protein sequence ID" value="ENSP00000333194.5"/>
    <property type="gene ID" value="ENSG00000171700.14"/>
</dbReference>
<dbReference type="Ensembl" id="ENST00000395042.2">
    <property type="protein sequence ID" value="ENSP00000378483.1"/>
    <property type="gene ID" value="ENSG00000171700.14"/>
</dbReference>
<dbReference type="GeneID" id="10287"/>
<dbReference type="KEGG" id="hsa:10287"/>
<dbReference type="MANE-Select" id="ENST00000395042.2">
    <property type="protein sequence ID" value="ENSP00000378483.1"/>
    <property type="RefSeq nucleotide sequence ID" value="NM_005873.3"/>
    <property type="RefSeq protein sequence ID" value="NP_005864.1"/>
</dbReference>
<dbReference type="UCSC" id="uc002yhy.4">
    <property type="organism name" value="human"/>
</dbReference>
<dbReference type="AGR" id="HGNC:13735"/>
<dbReference type="CTD" id="10287"/>
<dbReference type="DisGeNET" id="10287"/>
<dbReference type="GeneCards" id="RGS19"/>
<dbReference type="HGNC" id="HGNC:13735">
    <property type="gene designation" value="RGS19"/>
</dbReference>
<dbReference type="HPA" id="ENSG00000171700">
    <property type="expression patterns" value="Tissue enhanced (bone marrow, lymphoid tissue)"/>
</dbReference>
<dbReference type="MIM" id="605071">
    <property type="type" value="gene"/>
</dbReference>
<dbReference type="neXtProt" id="NX_P49795"/>
<dbReference type="OpenTargets" id="ENSG00000171700"/>
<dbReference type="PharmGKB" id="PA34370"/>
<dbReference type="VEuPathDB" id="HostDB:ENSG00000171700"/>
<dbReference type="eggNOG" id="KOG3589">
    <property type="taxonomic scope" value="Eukaryota"/>
</dbReference>
<dbReference type="GeneTree" id="ENSGT00940000160391"/>
<dbReference type="HOGENOM" id="CLU_059863_0_2_1"/>
<dbReference type="InParanoid" id="P49795"/>
<dbReference type="OMA" id="EANQHMV"/>
<dbReference type="OrthoDB" id="10266999at2759"/>
<dbReference type="PAN-GO" id="P49795">
    <property type="GO annotations" value="0 GO annotations based on evolutionary models"/>
</dbReference>
<dbReference type="PhylomeDB" id="P49795"/>
<dbReference type="TreeFam" id="TF315837"/>
<dbReference type="PathwayCommons" id="P49795"/>
<dbReference type="Reactome" id="R-HSA-416476">
    <property type="pathway name" value="G alpha (q) signalling events"/>
</dbReference>
<dbReference type="Reactome" id="R-HSA-418594">
    <property type="pathway name" value="G alpha (i) signalling events"/>
</dbReference>
<dbReference type="Reactome" id="R-HSA-418597">
    <property type="pathway name" value="G alpha (z) signalling events"/>
</dbReference>
<dbReference type="SignaLink" id="P49795"/>
<dbReference type="SIGNOR" id="P49795"/>
<dbReference type="BioGRID-ORCS" id="10287">
    <property type="hits" value="13 hits in 1155 CRISPR screens"/>
</dbReference>
<dbReference type="EvolutionaryTrace" id="P49795"/>
<dbReference type="GeneWiki" id="RGS19"/>
<dbReference type="GenomeRNAi" id="10287"/>
<dbReference type="Pharos" id="P49795">
    <property type="development level" value="Tchem"/>
</dbReference>
<dbReference type="PRO" id="PR:P49795"/>
<dbReference type="Proteomes" id="UP000005640">
    <property type="component" value="Chromosome 20"/>
</dbReference>
<dbReference type="RNAct" id="P49795">
    <property type="molecule type" value="protein"/>
</dbReference>
<dbReference type="Bgee" id="ENSG00000171700">
    <property type="expression patterns" value="Expressed in granulocyte and 195 other cell types or tissues"/>
</dbReference>
<dbReference type="GO" id="GO:0005794">
    <property type="term" value="C:Golgi apparatus"/>
    <property type="evidence" value="ECO:0000304"/>
    <property type="project" value="ProtInc"/>
</dbReference>
<dbReference type="GO" id="GO:0016020">
    <property type="term" value="C:membrane"/>
    <property type="evidence" value="ECO:0000304"/>
    <property type="project" value="ProtInc"/>
</dbReference>
<dbReference type="GO" id="GO:0005886">
    <property type="term" value="C:plasma membrane"/>
    <property type="evidence" value="ECO:0000304"/>
    <property type="project" value="Reactome"/>
</dbReference>
<dbReference type="GO" id="GO:0003924">
    <property type="term" value="F:GTPase activity"/>
    <property type="evidence" value="ECO:0000304"/>
    <property type="project" value="Reactome"/>
</dbReference>
<dbReference type="GO" id="GO:0006914">
    <property type="term" value="P:autophagy"/>
    <property type="evidence" value="ECO:0007669"/>
    <property type="project" value="UniProtKB-KW"/>
</dbReference>
<dbReference type="GO" id="GO:0007186">
    <property type="term" value="P:G protein-coupled receptor signaling pathway"/>
    <property type="evidence" value="ECO:0000304"/>
    <property type="project" value="Reactome"/>
</dbReference>
<dbReference type="GO" id="GO:0009968">
    <property type="term" value="P:negative regulation of signal transduction"/>
    <property type="evidence" value="ECO:0007669"/>
    <property type="project" value="UniProtKB-KW"/>
</dbReference>
<dbReference type="GO" id="GO:0007264">
    <property type="term" value="P:small GTPase-mediated signal transduction"/>
    <property type="evidence" value="ECO:0000304"/>
    <property type="project" value="ProtInc"/>
</dbReference>
<dbReference type="CDD" id="cd08745">
    <property type="entry name" value="RGS_RGS19"/>
    <property type="match status" value="1"/>
</dbReference>
<dbReference type="FunFam" id="1.10.167.10:FF:000001">
    <property type="entry name" value="Putative regulator of g-protein signaling 12"/>
    <property type="match status" value="1"/>
</dbReference>
<dbReference type="FunFam" id="1.10.196.10:FF:000001">
    <property type="entry name" value="Regulator of G-protein signaling 8"/>
    <property type="match status" value="1"/>
</dbReference>
<dbReference type="Gene3D" id="1.10.196.10">
    <property type="match status" value="2"/>
</dbReference>
<dbReference type="Gene3D" id="1.10.167.10">
    <property type="entry name" value="Regulator of G-protein Signalling 4, domain 2"/>
    <property type="match status" value="1"/>
</dbReference>
<dbReference type="InterPro" id="IPR016137">
    <property type="entry name" value="RGS"/>
</dbReference>
<dbReference type="InterPro" id="IPR036305">
    <property type="entry name" value="RGS_sf"/>
</dbReference>
<dbReference type="InterPro" id="IPR024066">
    <property type="entry name" value="RGS_subdom1/3"/>
</dbReference>
<dbReference type="InterPro" id="IPR044926">
    <property type="entry name" value="RGS_subdomain_2"/>
</dbReference>
<dbReference type="PANTHER" id="PTHR10845">
    <property type="entry name" value="REGULATOR OF G PROTEIN SIGNALING"/>
    <property type="match status" value="1"/>
</dbReference>
<dbReference type="PANTHER" id="PTHR10845:SF145">
    <property type="entry name" value="REGULATOR OF G-PROTEIN SIGNALING 19"/>
    <property type="match status" value="1"/>
</dbReference>
<dbReference type="Pfam" id="PF00615">
    <property type="entry name" value="RGS"/>
    <property type="match status" value="1"/>
</dbReference>
<dbReference type="PRINTS" id="PR01301">
    <property type="entry name" value="RGSPROTEIN"/>
</dbReference>
<dbReference type="SMART" id="SM00315">
    <property type="entry name" value="RGS"/>
    <property type="match status" value="1"/>
</dbReference>
<dbReference type="SUPFAM" id="SSF48097">
    <property type="entry name" value="Regulator of G-protein signaling, RGS"/>
    <property type="match status" value="1"/>
</dbReference>
<dbReference type="PROSITE" id="PS50132">
    <property type="entry name" value="RGS"/>
    <property type="match status" value="1"/>
</dbReference>
<comment type="function">
    <text>Inhibits signal transduction by increasing the GTPase activity of G protein alpha subunits thereby driving them into their inactive GDP-bound form. Binds to G-alpha subfamily 1 members, with the order G(i)a3 &gt; G(i)a1 &gt; G(o)a &gt;&gt; G(z)a/G(i)a2. Activity on G(z)-alpha is inhibited by phosphorylation and palmitoylation of the G-protein.</text>
</comment>
<comment type="subunit">
    <text evidence="5">Interacts with GIPC PDZ domain. Interacts with GNAO1 (PubMed:34685729).</text>
</comment>
<comment type="interaction">
    <interactant intactId="EBI-874907">
        <id>P49795</id>
    </interactant>
    <interactant intactId="EBI-1211484">
        <id>P05187</id>
        <label>ALPP</label>
    </interactant>
    <organismsDiffer>false</organismsDiffer>
    <experiments>3</experiments>
</comment>
<comment type="interaction">
    <interactant intactId="EBI-874907">
        <id>P49795</id>
    </interactant>
    <interactant intactId="EBI-744545">
        <id>Q8NEC5</id>
        <label>CATSPER1</label>
    </interactant>
    <organismsDiffer>false</organismsDiffer>
    <experiments>3</experiments>
</comment>
<comment type="interaction">
    <interactant intactId="EBI-874907">
        <id>P49795</id>
    </interactant>
    <interactant intactId="EBI-740785">
        <id>P49639</id>
        <label>HOXA1</label>
    </interactant>
    <organismsDiffer>false</organismsDiffer>
    <experiments>3</experiments>
</comment>
<comment type="interaction">
    <interactant intactId="EBI-874907">
        <id>P49795</id>
    </interactant>
    <interactant intactId="EBI-10250562">
        <id>Q6L8G9</id>
        <label>KRTAP5-6</label>
    </interactant>
    <organismsDiffer>false</organismsDiffer>
    <experiments>3</experiments>
</comment>
<comment type="interaction">
    <interactant intactId="EBI-874907">
        <id>P49795</id>
    </interactant>
    <interactant intactId="EBI-10246358">
        <id>Q5TA78</id>
        <label>LCE4A</label>
    </interactant>
    <organismsDiffer>false</organismsDiffer>
    <experiments>3</experiments>
</comment>
<comment type="interaction">
    <interactant intactId="EBI-874907">
        <id>P49795</id>
    </interactant>
    <interactant intactId="EBI-1210753">
        <id>Q7Z417</id>
        <label>NUFIP2</label>
    </interactant>
    <organismsDiffer>false</organismsDiffer>
    <experiments>3</experiments>
</comment>
<comment type="interaction">
    <interactant intactId="EBI-874907">
        <id>P49795</id>
    </interactant>
    <interactant intactId="EBI-740446">
        <id>P32242</id>
        <label>OTX1</label>
    </interactant>
    <organismsDiffer>false</organismsDiffer>
    <experiments>3</experiments>
</comment>
<comment type="interaction">
    <interactant intactId="EBI-874907">
        <id>P49795</id>
    </interactant>
    <interactant intactId="EBI-17236143">
        <id>Q12837</id>
        <label>POU4F2</label>
    </interactant>
    <organismsDiffer>false</organismsDiffer>
    <experiments>3</experiments>
</comment>
<comment type="interaction">
    <interactant intactId="EBI-874907">
        <id>P49795</id>
    </interactant>
    <interactant intactId="EBI-359352">
        <id>P25786</id>
        <label>PSMA1</label>
    </interactant>
    <organismsDiffer>false</organismsDiffer>
    <experiments>3</experiments>
</comment>
<comment type="interaction">
    <interactant intactId="EBI-874907">
        <id>P49795</id>
    </interactant>
    <interactant intactId="EBI-10249550">
        <id>Q6EMK4</id>
        <label>VASN</label>
    </interactant>
    <organismsDiffer>false</organismsDiffer>
    <experiments>3</experiments>
</comment>
<comment type="interaction">
    <interactant intactId="EBI-874907">
        <id>P49795</id>
    </interactant>
    <interactant intactId="EBI-874897">
        <id>P08753</id>
        <label>Gnai3</label>
    </interactant>
    <organismsDiffer>true</organismsDiffer>
    <experiments>4</experiments>
</comment>
<comment type="subcellular location">
    <subcellularLocation>
        <location>Membrane</location>
        <topology>Lipid-anchor</topology>
    </subcellularLocation>
</comment>
<comment type="tissue specificity">
    <text>Highest expression in lung. Placenta, liver and heart also express high levels of GAIP.</text>
</comment>
<comment type="PTM">
    <text evidence="6">Fatty acylated. Heavily palmitoylated in the cysteine string motif.</text>
</comment>
<comment type="PTM">
    <text evidence="4">Phosphorylated, mainly on serine residues.</text>
</comment>
<keyword id="KW-0002">3D-structure</keyword>
<keyword id="KW-0072">Autophagy</keyword>
<keyword id="KW-0449">Lipoprotein</keyword>
<keyword id="KW-0472">Membrane</keyword>
<keyword id="KW-0564">Palmitate</keyword>
<keyword id="KW-0597">Phosphoprotein</keyword>
<keyword id="KW-1267">Proteomics identification</keyword>
<keyword id="KW-1185">Reference proteome</keyword>
<keyword id="KW-0734">Signal transduction inhibitor</keyword>